<name>DGTL1_CERS1</name>
<keyword id="KW-0378">Hydrolase</keyword>
<dbReference type="EMBL" id="CP000577">
    <property type="protein sequence ID" value="ABN76427.1"/>
    <property type="molecule type" value="Genomic_DNA"/>
</dbReference>
<dbReference type="RefSeq" id="WP_011840939.1">
    <property type="nucleotide sequence ID" value="NC_009049.1"/>
</dbReference>
<dbReference type="SMR" id="A3PJB1"/>
<dbReference type="KEGG" id="rsh:Rsph17029_1317"/>
<dbReference type="HOGENOM" id="CLU_028163_1_0_5"/>
<dbReference type="GO" id="GO:0008832">
    <property type="term" value="F:dGTPase activity"/>
    <property type="evidence" value="ECO:0007669"/>
    <property type="project" value="TreeGrafter"/>
</dbReference>
<dbReference type="GO" id="GO:0006203">
    <property type="term" value="P:dGTP catabolic process"/>
    <property type="evidence" value="ECO:0007669"/>
    <property type="project" value="TreeGrafter"/>
</dbReference>
<dbReference type="CDD" id="cd00077">
    <property type="entry name" value="HDc"/>
    <property type="match status" value="1"/>
</dbReference>
<dbReference type="Gene3D" id="1.10.3210.10">
    <property type="entry name" value="Hypothetical protein af1432"/>
    <property type="match status" value="1"/>
</dbReference>
<dbReference type="HAMAP" id="MF_01212">
    <property type="entry name" value="dGTPase_type2"/>
    <property type="match status" value="1"/>
</dbReference>
<dbReference type="InterPro" id="IPR006261">
    <property type="entry name" value="dGTPase"/>
</dbReference>
<dbReference type="InterPro" id="IPR050135">
    <property type="entry name" value="dGTPase-like"/>
</dbReference>
<dbReference type="InterPro" id="IPR023023">
    <property type="entry name" value="dNTPase_2"/>
</dbReference>
<dbReference type="InterPro" id="IPR003607">
    <property type="entry name" value="HD/PDEase_dom"/>
</dbReference>
<dbReference type="InterPro" id="IPR006674">
    <property type="entry name" value="HD_domain"/>
</dbReference>
<dbReference type="InterPro" id="IPR026875">
    <property type="entry name" value="PHydrolase_assoc_dom"/>
</dbReference>
<dbReference type="NCBIfam" id="TIGR01353">
    <property type="entry name" value="dGTP_triPase"/>
    <property type="match status" value="1"/>
</dbReference>
<dbReference type="NCBIfam" id="NF002326">
    <property type="entry name" value="PRK01286.1-1"/>
    <property type="match status" value="1"/>
</dbReference>
<dbReference type="NCBIfam" id="NF002328">
    <property type="entry name" value="PRK01286.1-3"/>
    <property type="match status" value="1"/>
</dbReference>
<dbReference type="PANTHER" id="PTHR11373:SF43">
    <property type="entry name" value="DEOXYGUANOSINETRIPHOSPHATE TRIPHOSPHOHYDROLASE-LIKE PROTEIN"/>
    <property type="match status" value="1"/>
</dbReference>
<dbReference type="PANTHER" id="PTHR11373">
    <property type="entry name" value="DEOXYNUCLEOSIDE TRIPHOSPHATE TRIPHOSPHOHYDROLASE"/>
    <property type="match status" value="1"/>
</dbReference>
<dbReference type="Pfam" id="PF01966">
    <property type="entry name" value="HD"/>
    <property type="match status" value="1"/>
</dbReference>
<dbReference type="Pfam" id="PF13286">
    <property type="entry name" value="HD_assoc"/>
    <property type="match status" value="1"/>
</dbReference>
<dbReference type="SMART" id="SM00471">
    <property type="entry name" value="HDc"/>
    <property type="match status" value="1"/>
</dbReference>
<dbReference type="SUPFAM" id="SSF109604">
    <property type="entry name" value="HD-domain/PDEase-like"/>
    <property type="match status" value="1"/>
</dbReference>
<dbReference type="PROSITE" id="PS51831">
    <property type="entry name" value="HD"/>
    <property type="match status" value="1"/>
</dbReference>
<comment type="similarity">
    <text evidence="1">Belongs to the dGTPase family. Type 2 subfamily.</text>
</comment>
<gene>
    <name type="ordered locus">Rsph17029_1317</name>
</gene>
<sequence length="378" mass="42641">MLAPFACQPGESRGRQKPESMSTFRSPFQRDRDRIIHSSAFRRLKHKTQVFVEHEGDYYRTRLTHSIEVAQVARTISGVLGLNTDLAECIALAHDLGHTPFGHTGEDALARLMEPYGGFDHNAQAMRIVTRLERHYAEFDGLNLTWESLEGIAKHNGPVEGPLPYALAEANAQWDLELHTYASAEAQVAAIADDVAYSHHDLHDGLRSGLFTEADLMELPVTAPAFDEVDALYPGLEPMRRRHEALRRVFGRMVEDVIAVAQGRLEAAQPKSVEEIRQMGATVIRFSKPLYQELKVIRSFLFHRMYRAPSVMKERAKVTAVVNDLFPLFMARPELLPQEWRRDVEAAADETTLARIVADYVAGMTDRFALQEHARLCG</sequence>
<feature type="chain" id="PRO_1000164737" description="Deoxyguanosinetriphosphate triphosphohydrolase-like protein">
    <location>
        <begin position="1"/>
        <end position="378"/>
    </location>
</feature>
<feature type="domain" description="HD" evidence="2">
    <location>
        <begin position="62"/>
        <end position="198"/>
    </location>
</feature>
<feature type="region of interest" description="Disordered" evidence="3">
    <location>
        <begin position="1"/>
        <end position="28"/>
    </location>
</feature>
<protein>
    <recommendedName>
        <fullName evidence="1">Deoxyguanosinetriphosphate triphosphohydrolase-like protein</fullName>
    </recommendedName>
</protein>
<reference key="1">
    <citation type="submission" date="2007-02" db="EMBL/GenBank/DDBJ databases">
        <title>Complete sequence of chromosome 1 of Rhodobacter sphaeroides ATCC 17029.</title>
        <authorList>
            <person name="Copeland A."/>
            <person name="Lucas S."/>
            <person name="Lapidus A."/>
            <person name="Barry K."/>
            <person name="Detter J.C."/>
            <person name="Glavina del Rio T."/>
            <person name="Hammon N."/>
            <person name="Israni S."/>
            <person name="Dalin E."/>
            <person name="Tice H."/>
            <person name="Pitluck S."/>
            <person name="Kiss H."/>
            <person name="Brettin T."/>
            <person name="Bruce D."/>
            <person name="Han C."/>
            <person name="Tapia R."/>
            <person name="Gilna P."/>
            <person name="Schmutz J."/>
            <person name="Larimer F."/>
            <person name="Land M."/>
            <person name="Hauser L."/>
            <person name="Kyrpides N."/>
            <person name="Mikhailova N."/>
            <person name="Richardson P."/>
            <person name="Mackenzie C."/>
            <person name="Choudhary M."/>
            <person name="Donohue T.J."/>
            <person name="Kaplan S."/>
        </authorList>
    </citation>
    <scope>NUCLEOTIDE SEQUENCE [LARGE SCALE GENOMIC DNA]</scope>
    <source>
        <strain>ATCC 17029 / ATH 2.4.9</strain>
    </source>
</reference>
<accession>A3PJB1</accession>
<evidence type="ECO:0000255" key="1">
    <source>
        <dbReference type="HAMAP-Rule" id="MF_01212"/>
    </source>
</evidence>
<evidence type="ECO:0000255" key="2">
    <source>
        <dbReference type="PROSITE-ProRule" id="PRU01175"/>
    </source>
</evidence>
<evidence type="ECO:0000256" key="3">
    <source>
        <dbReference type="SAM" id="MobiDB-lite"/>
    </source>
</evidence>
<proteinExistence type="inferred from homology"/>
<organism>
    <name type="scientific">Cereibacter sphaeroides (strain ATCC 17029 / ATH 2.4.9)</name>
    <name type="common">Rhodobacter sphaeroides</name>
    <dbReference type="NCBI Taxonomy" id="349101"/>
    <lineage>
        <taxon>Bacteria</taxon>
        <taxon>Pseudomonadati</taxon>
        <taxon>Pseudomonadota</taxon>
        <taxon>Alphaproteobacteria</taxon>
        <taxon>Rhodobacterales</taxon>
        <taxon>Paracoccaceae</taxon>
        <taxon>Cereibacter</taxon>
    </lineage>
</organism>